<reference key="1">
    <citation type="journal article" date="2002" name="Mol. Microbiol.">
        <title>Genome sequence of Streptococcus agalactiae, a pathogen causing invasive neonatal disease.</title>
        <authorList>
            <person name="Glaser P."/>
            <person name="Rusniok C."/>
            <person name="Buchrieser C."/>
            <person name="Chevalier F."/>
            <person name="Frangeul L."/>
            <person name="Msadek T."/>
            <person name="Zouine M."/>
            <person name="Couve E."/>
            <person name="Lalioui L."/>
            <person name="Poyart C."/>
            <person name="Trieu-Cuot P."/>
            <person name="Kunst F."/>
        </authorList>
    </citation>
    <scope>NUCLEOTIDE SEQUENCE [LARGE SCALE GENOMIC DNA]</scope>
    <source>
        <strain>NEM316</strain>
    </source>
</reference>
<evidence type="ECO:0000250" key="1"/>
<evidence type="ECO:0000256" key="2">
    <source>
        <dbReference type="SAM" id="MobiDB-lite"/>
    </source>
</evidence>
<evidence type="ECO:0000305" key="3"/>
<name>DNAK_STRA3</name>
<accession>P0A3J2</accession>
<accession>P95693</accession>
<gene>
    <name type="primary">dnaK</name>
    <name type="ordered locus">gbs0096</name>
</gene>
<sequence>MSKIIGIDLGTTNSAVAVLEGTESKIIANPEGNRTTPSVVSFKNGEIIVGDAAKRQAVTNPDTVISIKSKMGTSEKVSANGKEYTPQEISAMILQYLKGYAEDYLGEKVEKAVITVPAYFNDAQRQATKDAGKIAGLEVERIVNEPTAAALAYGMDKTDKDEKILVFDLGGGTFDVSILELGDGVFDVLATAGDNKLGGDDFDQKIIDFLVEEFKKENGIDLSQDKMALQRLKDAAEKAKKDLSGVTQTQISLPFITAGSAGPLHLEMSLSRAKFDDLTRDLVERTKTPVRQALSDAGLSLSEIDEVILVGGSTRIPAVVEAVKAETGKEPNKSVNPDEVVAMGAAIQGGVITGDVKDVVLLDVTPLSLGIETMGGVFTKLIDRNTTIPTSKSQVFSTAADNQPAVDIHVLQGERPMAADNKTLGRFQLTDIPAAPRGIPQIEVTFDIDKNGIVSVKAKDLGTQKEQHIVIQSNSGLTDEEIDKMMKDAEANAEADAKRKEEVDLKNEVDQAIFATEKTIKETEGKGFDTERDAAQSALDELKKAQESGNLDDMKAKLEALNEKAQALAVKLYEQAAAAQQAAQGAEGAQSADSSSKGDDVVDGEFTEK</sequence>
<keyword id="KW-0067">ATP-binding</keyword>
<keyword id="KW-0143">Chaperone</keyword>
<keyword id="KW-0547">Nucleotide-binding</keyword>
<keyword id="KW-0597">Phosphoprotein</keyword>
<keyword id="KW-0346">Stress response</keyword>
<dbReference type="EMBL" id="AL766843">
    <property type="protein sequence ID" value="CAD45741.1"/>
    <property type="molecule type" value="Genomic_DNA"/>
</dbReference>
<dbReference type="RefSeq" id="WP_000034648.1">
    <property type="nucleotide sequence ID" value="NC_004368.1"/>
</dbReference>
<dbReference type="SMR" id="P0A3J2"/>
<dbReference type="GeneID" id="66885073"/>
<dbReference type="KEGG" id="san:dnaK"/>
<dbReference type="eggNOG" id="COG0443">
    <property type="taxonomic scope" value="Bacteria"/>
</dbReference>
<dbReference type="HOGENOM" id="CLU_005965_2_4_9"/>
<dbReference type="Proteomes" id="UP000000823">
    <property type="component" value="Chromosome"/>
</dbReference>
<dbReference type="GO" id="GO:0005524">
    <property type="term" value="F:ATP binding"/>
    <property type="evidence" value="ECO:0007669"/>
    <property type="project" value="UniProtKB-UniRule"/>
</dbReference>
<dbReference type="GO" id="GO:0140662">
    <property type="term" value="F:ATP-dependent protein folding chaperone"/>
    <property type="evidence" value="ECO:0007669"/>
    <property type="project" value="InterPro"/>
</dbReference>
<dbReference type="GO" id="GO:0051082">
    <property type="term" value="F:unfolded protein binding"/>
    <property type="evidence" value="ECO:0007669"/>
    <property type="project" value="InterPro"/>
</dbReference>
<dbReference type="CDD" id="cd10234">
    <property type="entry name" value="ASKHA_NBD_HSP70_DnaK-like"/>
    <property type="match status" value="1"/>
</dbReference>
<dbReference type="FunFam" id="2.60.34.10:FF:000014">
    <property type="entry name" value="Chaperone protein DnaK HSP70"/>
    <property type="match status" value="1"/>
</dbReference>
<dbReference type="FunFam" id="3.30.420.40:FF:000071">
    <property type="entry name" value="Molecular chaperone DnaK"/>
    <property type="match status" value="1"/>
</dbReference>
<dbReference type="FunFam" id="3.90.640.10:FF:000003">
    <property type="entry name" value="Molecular chaperone DnaK"/>
    <property type="match status" value="1"/>
</dbReference>
<dbReference type="Gene3D" id="1.20.1270.10">
    <property type="match status" value="1"/>
</dbReference>
<dbReference type="Gene3D" id="3.30.420.40">
    <property type="match status" value="2"/>
</dbReference>
<dbReference type="Gene3D" id="3.90.640.10">
    <property type="entry name" value="Actin, Chain A, domain 4"/>
    <property type="match status" value="1"/>
</dbReference>
<dbReference type="Gene3D" id="2.60.34.10">
    <property type="entry name" value="Substrate Binding Domain Of DNAk, Chain A, domain 1"/>
    <property type="match status" value="1"/>
</dbReference>
<dbReference type="HAMAP" id="MF_00332">
    <property type="entry name" value="DnaK"/>
    <property type="match status" value="1"/>
</dbReference>
<dbReference type="InterPro" id="IPR043129">
    <property type="entry name" value="ATPase_NBD"/>
</dbReference>
<dbReference type="InterPro" id="IPR012725">
    <property type="entry name" value="Chaperone_DnaK"/>
</dbReference>
<dbReference type="InterPro" id="IPR018181">
    <property type="entry name" value="Heat_shock_70_CS"/>
</dbReference>
<dbReference type="InterPro" id="IPR029048">
    <property type="entry name" value="HSP70_C_sf"/>
</dbReference>
<dbReference type="InterPro" id="IPR029047">
    <property type="entry name" value="HSP70_peptide-bd_sf"/>
</dbReference>
<dbReference type="InterPro" id="IPR013126">
    <property type="entry name" value="Hsp_70_fam"/>
</dbReference>
<dbReference type="NCBIfam" id="NF001413">
    <property type="entry name" value="PRK00290.1"/>
    <property type="match status" value="1"/>
</dbReference>
<dbReference type="NCBIfam" id="TIGR02350">
    <property type="entry name" value="prok_dnaK"/>
    <property type="match status" value="1"/>
</dbReference>
<dbReference type="PANTHER" id="PTHR19375">
    <property type="entry name" value="HEAT SHOCK PROTEIN 70KDA"/>
    <property type="match status" value="1"/>
</dbReference>
<dbReference type="Pfam" id="PF00012">
    <property type="entry name" value="HSP70"/>
    <property type="match status" value="1"/>
</dbReference>
<dbReference type="PRINTS" id="PR00301">
    <property type="entry name" value="HEATSHOCK70"/>
</dbReference>
<dbReference type="SUPFAM" id="SSF53067">
    <property type="entry name" value="Actin-like ATPase domain"/>
    <property type="match status" value="2"/>
</dbReference>
<dbReference type="SUPFAM" id="SSF100934">
    <property type="entry name" value="Heat shock protein 70kD (HSP70), C-terminal subdomain"/>
    <property type="match status" value="1"/>
</dbReference>
<dbReference type="SUPFAM" id="SSF100920">
    <property type="entry name" value="Heat shock protein 70kD (HSP70), peptide-binding domain"/>
    <property type="match status" value="1"/>
</dbReference>
<dbReference type="PROSITE" id="PS00297">
    <property type="entry name" value="HSP70_1"/>
    <property type="match status" value="1"/>
</dbReference>
<dbReference type="PROSITE" id="PS00329">
    <property type="entry name" value="HSP70_2"/>
    <property type="match status" value="1"/>
</dbReference>
<dbReference type="PROSITE" id="PS01036">
    <property type="entry name" value="HSP70_3"/>
    <property type="match status" value="1"/>
</dbReference>
<comment type="function">
    <text evidence="1">Acts as a chaperone.</text>
</comment>
<comment type="induction">
    <text evidence="1">By stress conditions e.g. heat shock (By similarity).</text>
</comment>
<comment type="similarity">
    <text evidence="3">Belongs to the heat shock protein 70 family.</text>
</comment>
<feature type="chain" id="PRO_0000078546" description="Chaperone protein DnaK">
    <location>
        <begin position="1"/>
        <end position="609"/>
    </location>
</feature>
<feature type="region of interest" description="Disordered" evidence="2">
    <location>
        <begin position="578"/>
        <end position="609"/>
    </location>
</feature>
<feature type="compositionally biased region" description="Low complexity" evidence="2">
    <location>
        <begin position="578"/>
        <end position="595"/>
    </location>
</feature>
<feature type="compositionally biased region" description="Basic and acidic residues" evidence="2">
    <location>
        <begin position="596"/>
        <end position="609"/>
    </location>
</feature>
<feature type="modified residue" description="Phosphothreonine; by autocatalysis" evidence="1">
    <location>
        <position position="173"/>
    </location>
</feature>
<protein>
    <recommendedName>
        <fullName>Chaperone protein DnaK</fullName>
    </recommendedName>
    <alternativeName>
        <fullName>HSP70</fullName>
    </alternativeName>
    <alternativeName>
        <fullName>Heat shock 70 kDa protein</fullName>
    </alternativeName>
    <alternativeName>
        <fullName>Heat shock protein 70</fullName>
    </alternativeName>
</protein>
<proteinExistence type="inferred from homology"/>
<organism>
    <name type="scientific">Streptococcus agalactiae serotype III (strain NEM316)</name>
    <dbReference type="NCBI Taxonomy" id="211110"/>
    <lineage>
        <taxon>Bacteria</taxon>
        <taxon>Bacillati</taxon>
        <taxon>Bacillota</taxon>
        <taxon>Bacilli</taxon>
        <taxon>Lactobacillales</taxon>
        <taxon>Streptococcaceae</taxon>
        <taxon>Streptococcus</taxon>
    </lineage>
</organism>